<accession>A6VM61</accession>
<feature type="chain" id="PRO_1000071257" description="S-ribosylhomocysteine lyase">
    <location>
        <begin position="1"/>
        <end position="168"/>
    </location>
</feature>
<feature type="binding site" evidence="1">
    <location>
        <position position="54"/>
    </location>
    <ligand>
        <name>Fe cation</name>
        <dbReference type="ChEBI" id="CHEBI:24875"/>
    </ligand>
</feature>
<feature type="binding site" evidence="1">
    <location>
        <position position="58"/>
    </location>
    <ligand>
        <name>Fe cation</name>
        <dbReference type="ChEBI" id="CHEBI:24875"/>
    </ligand>
</feature>
<feature type="binding site" evidence="1">
    <location>
        <position position="128"/>
    </location>
    <ligand>
        <name>Fe cation</name>
        <dbReference type="ChEBI" id="CHEBI:24875"/>
    </ligand>
</feature>
<reference key="1">
    <citation type="journal article" date="2010" name="BMC Genomics">
        <title>A genomic perspective on the potential of Actinobacillus succinogenes for industrial succinate production.</title>
        <authorList>
            <person name="McKinlay J.B."/>
            <person name="Laivenieks M."/>
            <person name="Schindler B.D."/>
            <person name="McKinlay A.A."/>
            <person name="Siddaramappa S."/>
            <person name="Challacombe J.F."/>
            <person name="Lowry S.R."/>
            <person name="Clum A."/>
            <person name="Lapidus A.L."/>
            <person name="Burkhart K.B."/>
            <person name="Harkins V."/>
            <person name="Vieille C."/>
        </authorList>
    </citation>
    <scope>NUCLEOTIDE SEQUENCE [LARGE SCALE GENOMIC DNA]</scope>
    <source>
        <strain>ATCC 55618 / DSM 22257 / CCUG 43843 / 130Z</strain>
    </source>
</reference>
<organism>
    <name type="scientific">Actinobacillus succinogenes (strain ATCC 55618 / DSM 22257 / CCUG 43843 / 130Z)</name>
    <dbReference type="NCBI Taxonomy" id="339671"/>
    <lineage>
        <taxon>Bacteria</taxon>
        <taxon>Pseudomonadati</taxon>
        <taxon>Pseudomonadota</taxon>
        <taxon>Gammaproteobacteria</taxon>
        <taxon>Pasteurellales</taxon>
        <taxon>Pasteurellaceae</taxon>
        <taxon>Actinobacillus</taxon>
    </lineage>
</organism>
<proteinExistence type="inferred from homology"/>
<comment type="function">
    <text evidence="1">Involved in the synthesis of autoinducer 2 (AI-2) which is secreted by bacteria and is used to communicate both the cell density and the metabolic potential of the environment. The regulation of gene expression in response to changes in cell density is called quorum sensing. Catalyzes the transformation of S-ribosylhomocysteine (RHC) to homocysteine (HC) and 4,5-dihydroxy-2,3-pentadione (DPD).</text>
</comment>
<comment type="catalytic activity">
    <reaction evidence="1">
        <text>S-(5-deoxy-D-ribos-5-yl)-L-homocysteine = (S)-4,5-dihydroxypentane-2,3-dione + L-homocysteine</text>
        <dbReference type="Rhea" id="RHEA:17753"/>
        <dbReference type="ChEBI" id="CHEBI:29484"/>
        <dbReference type="ChEBI" id="CHEBI:58195"/>
        <dbReference type="ChEBI" id="CHEBI:58199"/>
        <dbReference type="EC" id="4.4.1.21"/>
    </reaction>
</comment>
<comment type="cofactor">
    <cofactor evidence="1">
        <name>Fe cation</name>
        <dbReference type="ChEBI" id="CHEBI:24875"/>
    </cofactor>
    <text evidence="1">Binds 1 Fe cation per subunit.</text>
</comment>
<comment type="subunit">
    <text evidence="1">Homodimer.</text>
</comment>
<comment type="similarity">
    <text evidence="1">Belongs to the LuxS family.</text>
</comment>
<evidence type="ECO:0000255" key="1">
    <source>
        <dbReference type="HAMAP-Rule" id="MF_00091"/>
    </source>
</evidence>
<name>LUXS_ACTSZ</name>
<protein>
    <recommendedName>
        <fullName evidence="1">S-ribosylhomocysteine lyase</fullName>
        <ecNumber evidence="1">4.4.1.21</ecNumber>
    </recommendedName>
    <alternativeName>
        <fullName evidence="1">AI-2 synthesis protein</fullName>
    </alternativeName>
    <alternativeName>
        <fullName evidence="1">Autoinducer-2 production protein LuxS</fullName>
    </alternativeName>
</protein>
<keyword id="KW-0071">Autoinducer synthesis</keyword>
<keyword id="KW-0408">Iron</keyword>
<keyword id="KW-0456">Lyase</keyword>
<keyword id="KW-0479">Metal-binding</keyword>
<keyword id="KW-0673">Quorum sensing</keyword>
<keyword id="KW-1185">Reference proteome</keyword>
<sequence>MPLLDSFKVDHTKMQAPAVRIAKTMTTPKGDLITVFDLRFCVPNKEIMSPKGIHTLEHLFAGFMRAHLNSDEVEIIDISPMGCRTGFYMSLIGAPSERRVADAWLAAMHDILNVQDQSKIPELNIYQCGTYTEHSLSDAHATAQHVITRGIGINKNEELLLDESLLTE</sequence>
<dbReference type="EC" id="4.4.1.21" evidence="1"/>
<dbReference type="EMBL" id="CP000746">
    <property type="protein sequence ID" value="ABR74058.1"/>
    <property type="molecule type" value="Genomic_DNA"/>
</dbReference>
<dbReference type="RefSeq" id="WP_012072438.1">
    <property type="nucleotide sequence ID" value="NC_009655.1"/>
</dbReference>
<dbReference type="SMR" id="A6VM61"/>
<dbReference type="STRING" id="339671.Asuc_0685"/>
<dbReference type="KEGG" id="asu:Asuc_0685"/>
<dbReference type="eggNOG" id="COG1854">
    <property type="taxonomic scope" value="Bacteria"/>
</dbReference>
<dbReference type="HOGENOM" id="CLU_107531_2_0_6"/>
<dbReference type="OrthoDB" id="9788129at2"/>
<dbReference type="Proteomes" id="UP000001114">
    <property type="component" value="Chromosome"/>
</dbReference>
<dbReference type="GO" id="GO:0005506">
    <property type="term" value="F:iron ion binding"/>
    <property type="evidence" value="ECO:0007669"/>
    <property type="project" value="InterPro"/>
</dbReference>
<dbReference type="GO" id="GO:0043768">
    <property type="term" value="F:S-ribosylhomocysteine lyase activity"/>
    <property type="evidence" value="ECO:0007669"/>
    <property type="project" value="UniProtKB-UniRule"/>
</dbReference>
<dbReference type="GO" id="GO:0009372">
    <property type="term" value="P:quorum sensing"/>
    <property type="evidence" value="ECO:0007669"/>
    <property type="project" value="UniProtKB-UniRule"/>
</dbReference>
<dbReference type="Gene3D" id="3.30.1360.80">
    <property type="entry name" value="S-ribosylhomocysteinase (LuxS)"/>
    <property type="match status" value="1"/>
</dbReference>
<dbReference type="HAMAP" id="MF_00091">
    <property type="entry name" value="LuxS"/>
    <property type="match status" value="1"/>
</dbReference>
<dbReference type="InterPro" id="IPR037005">
    <property type="entry name" value="LuxS_sf"/>
</dbReference>
<dbReference type="InterPro" id="IPR011249">
    <property type="entry name" value="Metalloenz_LuxS/M16"/>
</dbReference>
<dbReference type="InterPro" id="IPR003815">
    <property type="entry name" value="S-ribosylhomocysteinase"/>
</dbReference>
<dbReference type="NCBIfam" id="NF002602">
    <property type="entry name" value="PRK02260.1-2"/>
    <property type="match status" value="1"/>
</dbReference>
<dbReference type="PANTHER" id="PTHR35799">
    <property type="entry name" value="S-RIBOSYLHOMOCYSTEINE LYASE"/>
    <property type="match status" value="1"/>
</dbReference>
<dbReference type="PANTHER" id="PTHR35799:SF1">
    <property type="entry name" value="S-RIBOSYLHOMOCYSTEINE LYASE"/>
    <property type="match status" value="1"/>
</dbReference>
<dbReference type="Pfam" id="PF02664">
    <property type="entry name" value="LuxS"/>
    <property type="match status" value="1"/>
</dbReference>
<dbReference type="PIRSF" id="PIRSF006160">
    <property type="entry name" value="AI2"/>
    <property type="match status" value="1"/>
</dbReference>
<dbReference type="PRINTS" id="PR01487">
    <property type="entry name" value="LUXSPROTEIN"/>
</dbReference>
<dbReference type="SUPFAM" id="SSF63411">
    <property type="entry name" value="LuxS/MPP-like metallohydrolase"/>
    <property type="match status" value="1"/>
</dbReference>
<gene>
    <name evidence="1" type="primary">luxS</name>
    <name type="ordered locus">Asuc_0685</name>
</gene>